<feature type="chain" id="PRO_1000050517" description="Ketol-acid reductoisomerase (NADP(+))">
    <location>
        <begin position="1"/>
        <end position="338"/>
    </location>
</feature>
<feature type="domain" description="KARI N-terminal Rossmann" evidence="2">
    <location>
        <begin position="1"/>
        <end position="181"/>
    </location>
</feature>
<feature type="domain" description="KARI C-terminal knotted" evidence="3">
    <location>
        <begin position="182"/>
        <end position="327"/>
    </location>
</feature>
<feature type="active site" evidence="1">
    <location>
        <position position="107"/>
    </location>
</feature>
<feature type="binding site" evidence="1">
    <location>
        <begin position="24"/>
        <end position="27"/>
    </location>
    <ligand>
        <name>NADP(+)</name>
        <dbReference type="ChEBI" id="CHEBI:58349"/>
    </ligand>
</feature>
<feature type="binding site" evidence="1">
    <location>
        <position position="47"/>
    </location>
    <ligand>
        <name>NADP(+)</name>
        <dbReference type="ChEBI" id="CHEBI:58349"/>
    </ligand>
</feature>
<feature type="binding site" evidence="1">
    <location>
        <position position="52"/>
    </location>
    <ligand>
        <name>NADP(+)</name>
        <dbReference type="ChEBI" id="CHEBI:58349"/>
    </ligand>
</feature>
<feature type="binding site" evidence="1">
    <location>
        <position position="133"/>
    </location>
    <ligand>
        <name>NADP(+)</name>
        <dbReference type="ChEBI" id="CHEBI:58349"/>
    </ligand>
</feature>
<feature type="binding site" evidence="1">
    <location>
        <position position="190"/>
    </location>
    <ligand>
        <name>Mg(2+)</name>
        <dbReference type="ChEBI" id="CHEBI:18420"/>
        <label>1</label>
    </ligand>
</feature>
<feature type="binding site" evidence="1">
    <location>
        <position position="190"/>
    </location>
    <ligand>
        <name>Mg(2+)</name>
        <dbReference type="ChEBI" id="CHEBI:18420"/>
        <label>2</label>
    </ligand>
</feature>
<feature type="binding site" evidence="1">
    <location>
        <position position="194"/>
    </location>
    <ligand>
        <name>Mg(2+)</name>
        <dbReference type="ChEBI" id="CHEBI:18420"/>
        <label>1</label>
    </ligand>
</feature>
<feature type="binding site" evidence="1">
    <location>
        <position position="226"/>
    </location>
    <ligand>
        <name>Mg(2+)</name>
        <dbReference type="ChEBI" id="CHEBI:18420"/>
        <label>2</label>
    </ligand>
</feature>
<feature type="binding site" evidence="1">
    <location>
        <position position="230"/>
    </location>
    <ligand>
        <name>Mg(2+)</name>
        <dbReference type="ChEBI" id="CHEBI:18420"/>
        <label>2</label>
    </ligand>
</feature>
<feature type="binding site" evidence="1">
    <location>
        <position position="251"/>
    </location>
    <ligand>
        <name>substrate</name>
    </ligand>
</feature>
<gene>
    <name evidence="1" type="primary">ilvC</name>
    <name type="ordered locus">HEAR1239</name>
</gene>
<reference key="1">
    <citation type="journal article" date="2007" name="PLoS Genet.">
        <title>A tale of two oxidation states: bacterial colonization of arsenic-rich environments.</title>
        <authorList>
            <person name="Muller D."/>
            <person name="Medigue C."/>
            <person name="Koechler S."/>
            <person name="Barbe V."/>
            <person name="Barakat M."/>
            <person name="Talla E."/>
            <person name="Bonnefoy V."/>
            <person name="Krin E."/>
            <person name="Arsene-Ploetze F."/>
            <person name="Carapito C."/>
            <person name="Chandler M."/>
            <person name="Cournoyer B."/>
            <person name="Cruveiller S."/>
            <person name="Dossat C."/>
            <person name="Duval S."/>
            <person name="Heymann M."/>
            <person name="Leize E."/>
            <person name="Lieutaud A."/>
            <person name="Lievremont D."/>
            <person name="Makita Y."/>
            <person name="Mangenot S."/>
            <person name="Nitschke W."/>
            <person name="Ortet P."/>
            <person name="Perdrial N."/>
            <person name="Schoepp B."/>
            <person name="Siguier P."/>
            <person name="Simeonova D.D."/>
            <person name="Rouy Z."/>
            <person name="Segurens B."/>
            <person name="Turlin E."/>
            <person name="Vallenet D."/>
            <person name="van Dorsselaer A."/>
            <person name="Weiss S."/>
            <person name="Weissenbach J."/>
            <person name="Lett M.-C."/>
            <person name="Danchin A."/>
            <person name="Bertin P.N."/>
        </authorList>
    </citation>
    <scope>NUCLEOTIDE SEQUENCE [LARGE SCALE GENOMIC DNA]</scope>
    <source>
        <strain>ULPAs1</strain>
    </source>
</reference>
<sequence>MKVFYDKDCDLSLIKGKNVAIIGYGSQGHAHAQNLNDSGCKVTVGLRKGGASWDKVKNAGLNVAEVNDAVKAADVIMILLPDENIAQVYNENVAPHAKQGAVLAFAHGFNVHYGQVVPRADLDVIMIAPKAPGHTVRGTYSQGGGVPHLIAVYQDKSGVARDIALSYAMANGGGRAGIIETNFREETETDLFGEQAVLCGGAVELIKAGFETLTEAGYAPEMAYFECLHELKLIVDLIYEGGIANMNYSISNNAEYGEYVTGPRIVTEDTKNAMRQCLKDIQTGEYAKSFILENKAGAPTLISRRRLNAEHDIEQVGAKLRAMMPWIAKNKLVDQSKN</sequence>
<organism>
    <name type="scientific">Herminiimonas arsenicoxydans</name>
    <dbReference type="NCBI Taxonomy" id="204773"/>
    <lineage>
        <taxon>Bacteria</taxon>
        <taxon>Pseudomonadati</taxon>
        <taxon>Pseudomonadota</taxon>
        <taxon>Betaproteobacteria</taxon>
        <taxon>Burkholderiales</taxon>
        <taxon>Oxalobacteraceae</taxon>
        <taxon>Herminiimonas</taxon>
    </lineage>
</organism>
<name>ILVC_HERAR</name>
<protein>
    <recommendedName>
        <fullName evidence="1">Ketol-acid reductoisomerase (NADP(+))</fullName>
        <shortName evidence="1">KARI</shortName>
        <ecNumber evidence="1">1.1.1.86</ecNumber>
    </recommendedName>
    <alternativeName>
        <fullName evidence="1">Acetohydroxy-acid isomeroreductase</fullName>
        <shortName evidence="1">AHIR</shortName>
    </alternativeName>
    <alternativeName>
        <fullName evidence="1">Alpha-keto-beta-hydroxylacyl reductoisomerase</fullName>
    </alternativeName>
    <alternativeName>
        <fullName evidence="1">Ketol-acid reductoisomerase type 1</fullName>
    </alternativeName>
    <alternativeName>
        <fullName evidence="1">Ketol-acid reductoisomerase type I</fullName>
    </alternativeName>
</protein>
<evidence type="ECO:0000255" key="1">
    <source>
        <dbReference type="HAMAP-Rule" id="MF_00435"/>
    </source>
</evidence>
<evidence type="ECO:0000255" key="2">
    <source>
        <dbReference type="PROSITE-ProRule" id="PRU01197"/>
    </source>
</evidence>
<evidence type="ECO:0000255" key="3">
    <source>
        <dbReference type="PROSITE-ProRule" id="PRU01198"/>
    </source>
</evidence>
<accession>A4G4H8</accession>
<comment type="function">
    <text evidence="1">Involved in the biosynthesis of branched-chain amino acids (BCAA). Catalyzes an alkyl-migration followed by a ketol-acid reduction of (S)-2-acetolactate (S2AL) to yield (R)-2,3-dihydroxy-isovalerate. In the isomerase reaction, S2AL is rearranged via a Mg-dependent methyl migration to produce 3-hydroxy-3-methyl-2-ketobutyrate (HMKB). In the reductase reaction, this 2-ketoacid undergoes a metal-dependent reduction by NADPH to yield (R)-2,3-dihydroxy-isovalerate.</text>
</comment>
<comment type="catalytic activity">
    <reaction evidence="1">
        <text>(2R)-2,3-dihydroxy-3-methylbutanoate + NADP(+) = (2S)-2-acetolactate + NADPH + H(+)</text>
        <dbReference type="Rhea" id="RHEA:22068"/>
        <dbReference type="ChEBI" id="CHEBI:15378"/>
        <dbReference type="ChEBI" id="CHEBI:49072"/>
        <dbReference type="ChEBI" id="CHEBI:57783"/>
        <dbReference type="ChEBI" id="CHEBI:58349"/>
        <dbReference type="ChEBI" id="CHEBI:58476"/>
        <dbReference type="EC" id="1.1.1.86"/>
    </reaction>
</comment>
<comment type="catalytic activity">
    <reaction evidence="1">
        <text>(2R,3R)-2,3-dihydroxy-3-methylpentanoate + NADP(+) = (S)-2-ethyl-2-hydroxy-3-oxobutanoate + NADPH + H(+)</text>
        <dbReference type="Rhea" id="RHEA:13493"/>
        <dbReference type="ChEBI" id="CHEBI:15378"/>
        <dbReference type="ChEBI" id="CHEBI:49256"/>
        <dbReference type="ChEBI" id="CHEBI:49258"/>
        <dbReference type="ChEBI" id="CHEBI:57783"/>
        <dbReference type="ChEBI" id="CHEBI:58349"/>
        <dbReference type="EC" id="1.1.1.86"/>
    </reaction>
</comment>
<comment type="cofactor">
    <cofactor evidence="1">
        <name>Mg(2+)</name>
        <dbReference type="ChEBI" id="CHEBI:18420"/>
    </cofactor>
    <text evidence="1">Binds 2 magnesium ions per subunit.</text>
</comment>
<comment type="pathway">
    <text evidence="1">Amino-acid biosynthesis; L-isoleucine biosynthesis; L-isoleucine from 2-oxobutanoate: step 2/4.</text>
</comment>
<comment type="pathway">
    <text evidence="1">Amino-acid biosynthesis; L-valine biosynthesis; L-valine from pyruvate: step 2/4.</text>
</comment>
<comment type="similarity">
    <text evidence="1">Belongs to the ketol-acid reductoisomerase family.</text>
</comment>
<proteinExistence type="inferred from homology"/>
<dbReference type="EC" id="1.1.1.86" evidence="1"/>
<dbReference type="EMBL" id="CU207211">
    <property type="protein sequence ID" value="CAL61415.1"/>
    <property type="molecule type" value="Genomic_DNA"/>
</dbReference>
<dbReference type="SMR" id="A4G4H8"/>
<dbReference type="STRING" id="204773.HEAR1239"/>
<dbReference type="KEGG" id="har:HEAR1239"/>
<dbReference type="eggNOG" id="COG0059">
    <property type="taxonomic scope" value="Bacteria"/>
</dbReference>
<dbReference type="HOGENOM" id="CLU_033821_0_1_4"/>
<dbReference type="OrthoDB" id="9804088at2"/>
<dbReference type="UniPathway" id="UPA00047">
    <property type="reaction ID" value="UER00056"/>
</dbReference>
<dbReference type="UniPathway" id="UPA00049">
    <property type="reaction ID" value="UER00060"/>
</dbReference>
<dbReference type="Proteomes" id="UP000006697">
    <property type="component" value="Chromosome"/>
</dbReference>
<dbReference type="GO" id="GO:0005829">
    <property type="term" value="C:cytosol"/>
    <property type="evidence" value="ECO:0007669"/>
    <property type="project" value="TreeGrafter"/>
</dbReference>
<dbReference type="GO" id="GO:0004455">
    <property type="term" value="F:ketol-acid reductoisomerase activity"/>
    <property type="evidence" value="ECO:0007669"/>
    <property type="project" value="UniProtKB-UniRule"/>
</dbReference>
<dbReference type="GO" id="GO:0000287">
    <property type="term" value="F:magnesium ion binding"/>
    <property type="evidence" value="ECO:0007669"/>
    <property type="project" value="UniProtKB-UniRule"/>
</dbReference>
<dbReference type="GO" id="GO:0050661">
    <property type="term" value="F:NADP binding"/>
    <property type="evidence" value="ECO:0007669"/>
    <property type="project" value="InterPro"/>
</dbReference>
<dbReference type="GO" id="GO:0009097">
    <property type="term" value="P:isoleucine biosynthetic process"/>
    <property type="evidence" value="ECO:0007669"/>
    <property type="project" value="UniProtKB-UniRule"/>
</dbReference>
<dbReference type="GO" id="GO:0009099">
    <property type="term" value="P:L-valine biosynthetic process"/>
    <property type="evidence" value="ECO:0007669"/>
    <property type="project" value="UniProtKB-UniRule"/>
</dbReference>
<dbReference type="FunFam" id="3.40.50.720:FF:000023">
    <property type="entry name" value="Ketol-acid reductoisomerase (NADP(+))"/>
    <property type="match status" value="1"/>
</dbReference>
<dbReference type="Gene3D" id="6.10.240.10">
    <property type="match status" value="1"/>
</dbReference>
<dbReference type="Gene3D" id="3.40.50.720">
    <property type="entry name" value="NAD(P)-binding Rossmann-like Domain"/>
    <property type="match status" value="1"/>
</dbReference>
<dbReference type="HAMAP" id="MF_00435">
    <property type="entry name" value="IlvC"/>
    <property type="match status" value="1"/>
</dbReference>
<dbReference type="InterPro" id="IPR008927">
    <property type="entry name" value="6-PGluconate_DH-like_C_sf"/>
</dbReference>
<dbReference type="InterPro" id="IPR013023">
    <property type="entry name" value="KARI"/>
</dbReference>
<dbReference type="InterPro" id="IPR000506">
    <property type="entry name" value="KARI_C"/>
</dbReference>
<dbReference type="InterPro" id="IPR013116">
    <property type="entry name" value="KARI_N"/>
</dbReference>
<dbReference type="InterPro" id="IPR014359">
    <property type="entry name" value="KARI_prok"/>
</dbReference>
<dbReference type="InterPro" id="IPR036291">
    <property type="entry name" value="NAD(P)-bd_dom_sf"/>
</dbReference>
<dbReference type="NCBIfam" id="TIGR00465">
    <property type="entry name" value="ilvC"/>
    <property type="match status" value="1"/>
</dbReference>
<dbReference type="NCBIfam" id="NF004017">
    <property type="entry name" value="PRK05479.1"/>
    <property type="match status" value="1"/>
</dbReference>
<dbReference type="NCBIfam" id="NF009940">
    <property type="entry name" value="PRK13403.1"/>
    <property type="match status" value="1"/>
</dbReference>
<dbReference type="PANTHER" id="PTHR21371">
    <property type="entry name" value="KETOL-ACID REDUCTOISOMERASE, MITOCHONDRIAL"/>
    <property type="match status" value="1"/>
</dbReference>
<dbReference type="PANTHER" id="PTHR21371:SF1">
    <property type="entry name" value="KETOL-ACID REDUCTOISOMERASE, MITOCHONDRIAL"/>
    <property type="match status" value="1"/>
</dbReference>
<dbReference type="Pfam" id="PF01450">
    <property type="entry name" value="KARI_C"/>
    <property type="match status" value="1"/>
</dbReference>
<dbReference type="Pfam" id="PF07991">
    <property type="entry name" value="KARI_N"/>
    <property type="match status" value="1"/>
</dbReference>
<dbReference type="PIRSF" id="PIRSF000116">
    <property type="entry name" value="IlvC_gammaproteo"/>
    <property type="match status" value="1"/>
</dbReference>
<dbReference type="SUPFAM" id="SSF48179">
    <property type="entry name" value="6-phosphogluconate dehydrogenase C-terminal domain-like"/>
    <property type="match status" value="1"/>
</dbReference>
<dbReference type="SUPFAM" id="SSF51735">
    <property type="entry name" value="NAD(P)-binding Rossmann-fold domains"/>
    <property type="match status" value="1"/>
</dbReference>
<dbReference type="PROSITE" id="PS51851">
    <property type="entry name" value="KARI_C"/>
    <property type="match status" value="1"/>
</dbReference>
<dbReference type="PROSITE" id="PS51850">
    <property type="entry name" value="KARI_N"/>
    <property type="match status" value="1"/>
</dbReference>
<keyword id="KW-0028">Amino-acid biosynthesis</keyword>
<keyword id="KW-0100">Branched-chain amino acid biosynthesis</keyword>
<keyword id="KW-0460">Magnesium</keyword>
<keyword id="KW-0479">Metal-binding</keyword>
<keyword id="KW-0521">NADP</keyword>
<keyword id="KW-0560">Oxidoreductase</keyword>
<keyword id="KW-1185">Reference proteome</keyword>